<evidence type="ECO:0000250" key="1">
    <source>
        <dbReference type="UniProtKB" id="Q9JMD0"/>
    </source>
</evidence>
<evidence type="ECO:0000256" key="2">
    <source>
        <dbReference type="SAM" id="MobiDB-lite"/>
    </source>
</evidence>
<evidence type="ECO:0000269" key="3">
    <source>
    </source>
</evidence>
<evidence type="ECO:0000269" key="4">
    <source>
    </source>
</evidence>
<evidence type="ECO:0000269" key="5">
    <source>
    </source>
</evidence>
<evidence type="ECO:0000269" key="6">
    <source>
    </source>
</evidence>
<evidence type="ECO:0000303" key="7">
    <source>
    </source>
</evidence>
<evidence type="ECO:0000303" key="8">
    <source>
    </source>
</evidence>
<evidence type="ECO:0000303" key="9">
    <source>
    </source>
</evidence>
<evidence type="ECO:0000303" key="10">
    <source>
    </source>
</evidence>
<evidence type="ECO:0000303" key="11">
    <source ref="2"/>
</evidence>
<evidence type="ECO:0000303" key="12">
    <source ref="4"/>
</evidence>
<evidence type="ECO:0000312" key="13">
    <source>
        <dbReference type="HGNC" id="HGNC:12998"/>
    </source>
</evidence>
<sequence length="478" mass="50751">MGRKKKKQLKPWCWYCNRDFDDEKILIQHQKAKHFKCHICHKKLYTGPGLAIHCMQVHKETIDAVPNAIPGRTDIELEIYGMEGIPEKDMDERRRLLEQKTQESQKKKQQDDSDEYDDDDSAASTSFQPQPVQPQQGYIPPMAQPGLPPVPGAPGMPPGIPPLMPGVPPLMPGMPPVMPGMPPGMMPMGGMMPPGPGIPPLMPGMPPGMPPPVPRPGIPPMTQAQAVSAPGILNRPPAPTATVPAPQPPVTKPLFPSAGQMGTPVTSSSTASSNSESLSASSKALFPSTAQAQAAVQGPVGTDFKPLNSTPATTTEPPKPTFPAYTQSTASTTSTTNSTAAKPAASITSKPATLTTTSATSKLIHPDEDISLEERRAQLPKYQRNLPRPGQAPIGNPPVGPIGGMMPPQPGIPQQQGMRPPMPPHGQYGGHHQGMPGYLPGAMPPYGQGPPMVPPYQGGPPRPPMGMRPPVMSQGGRY</sequence>
<accession>O43670</accession>
<accession>A8K6Y6</accession>
<accession>E1P660</accession>
<accession>E1P661</accession>
<accession>E1P662</accession>
<accession>Q53XS9</accession>
<accession>Q96HW5</accession>
<accession>Q9BUQ7</accession>
<keyword id="KW-0025">Alternative splicing</keyword>
<keyword id="KW-0131">Cell cycle</keyword>
<keyword id="KW-0132">Cell division</keyword>
<keyword id="KW-0137">Centromere</keyword>
<keyword id="KW-0158">Chromosome</keyword>
<keyword id="KW-0159">Chromosome partition</keyword>
<keyword id="KW-0963">Cytoplasm</keyword>
<keyword id="KW-0206">Cytoskeleton</keyword>
<keyword id="KW-0238">DNA-binding</keyword>
<keyword id="KW-0995">Kinetochore</keyword>
<keyword id="KW-0479">Metal-binding</keyword>
<keyword id="KW-0493">Microtubule</keyword>
<keyword id="KW-0498">Mitosis</keyword>
<keyword id="KW-0539">Nucleus</keyword>
<keyword id="KW-1267">Proteomics identification</keyword>
<keyword id="KW-1185">Reference proteome</keyword>
<keyword id="KW-0677">Repeat</keyword>
<keyword id="KW-0862">Zinc</keyword>
<keyword id="KW-0863">Zinc-finger</keyword>
<organism>
    <name type="scientific">Homo sapiens</name>
    <name type="common">Human</name>
    <dbReference type="NCBI Taxonomy" id="9606"/>
    <lineage>
        <taxon>Eukaryota</taxon>
        <taxon>Metazoa</taxon>
        <taxon>Chordata</taxon>
        <taxon>Craniata</taxon>
        <taxon>Vertebrata</taxon>
        <taxon>Euteleostomi</taxon>
        <taxon>Mammalia</taxon>
        <taxon>Eutheria</taxon>
        <taxon>Euarchontoglires</taxon>
        <taxon>Primates</taxon>
        <taxon>Haplorrhini</taxon>
        <taxon>Catarrhini</taxon>
        <taxon>Hominidae</taxon>
        <taxon>Homo</taxon>
    </lineage>
</organism>
<comment type="function">
    <text evidence="3 4 5">Kinetochore- and microtubule-binding protein that plays a key role in spindle assembly (PubMed:24462186, PubMed:24462187, PubMed:26388440). ZNF207/BuGZ is mainly composed of disordered low-complexity regions and undergoes phase transition or coacervation to form temperature-dependent liquid droplets. Coacervation promotes microtubule bundling and concentrates tubulin, promoting microtubule polymerization and assembly of spindle and spindle matrix by concentrating its building blocks (PubMed:26388440). Also acts as a regulator of mitotic chromosome alignment by mediating the stability and kinetochore loading of BUB3 (PubMed:24462186, PubMed:24462187). Mechanisms by which BUB3 is protected are unclear: according to a first report, ZNF207/BuGZ may act by blocking ubiquitination and proteasomal degradation of BUB3 (PubMed:24462186). According to another report, the stabilization is independent of the proteasome (PubMed:24462187).</text>
</comment>
<comment type="subunit">
    <text evidence="3 4">Interacts (via GLEBS region) with BUB3.</text>
</comment>
<comment type="interaction">
    <interactant intactId="EBI-2513125">
        <id>O43670</id>
    </interactant>
    <interactant intactId="EBI-1050987">
        <id>O43684</id>
        <label>BUB3</label>
    </interactant>
    <organismsDiffer>false</organismsDiffer>
    <experiments>5</experiments>
</comment>
<comment type="subcellular location">
    <subcellularLocation>
        <location evidence="3 4">Nucleus</location>
    </subcellularLocation>
    <subcellularLocation>
        <location evidence="3 4">Chromosome</location>
        <location evidence="3 4">Centromere</location>
        <location evidence="3 4">Kinetochore</location>
    </subcellularLocation>
    <subcellularLocation>
        <location evidence="5">Cytoplasm</location>
        <location evidence="5">Cytoskeleton</location>
        <location evidence="5">Spindle</location>
    </subcellularLocation>
    <text evidence="3 4">Localizes primarily to the nucleus in interphase, concentrates at kinetochores prior to nuclear envelope breakdown and during early prometaphase, and disappears from kinetochores upon microtubule-binding.</text>
</comment>
<comment type="alternative products">
    <event type="alternative splicing"/>
    <isoform>
        <id>O43670-1</id>
        <name>1</name>
        <sequence type="displayed"/>
    </isoform>
    <isoform>
        <id>O43670-2</id>
        <name>2</name>
        <sequence type="described" ref="VSP_006904 VSP_006905"/>
    </isoform>
    <isoform>
        <id>O43670-3</id>
        <name>3</name>
        <sequence type="described" ref="VSP_006903 VSP_006904"/>
    </isoform>
    <isoform>
        <id>O43670-4</id>
        <name>4</name>
        <sequence type="described" ref="VSP_006904"/>
    </isoform>
    <text>Experimental confirmation may be lacking for some isoforms.</text>
</comment>
<comment type="tissue specificity">
    <text evidence="6">Ubiquitous.</text>
</comment>
<comment type="domain">
    <text evidence="3 4">The GLEBS region mediates interaction with BUB3 (PubMed:24462186, PubMed:24462187).</text>
</comment>
<comment type="domain">
    <text evidence="3">The microtubule-binding region is required for efficient loading of BUB3 onto kinetochores and proper mitosis.</text>
</comment>
<comment type="domain">
    <text evidence="1">Mainly composed of disordered low-complexity regions outside of the C2H2-type zinc fingers. Coacervation depends on hydrophobic and aromatic Phe and Tyr in the disordered low-complexity region, that may promote coacervation by forming intermolecular hydrophobic interactions.</text>
</comment>
<dbReference type="EMBL" id="AF046001">
    <property type="protein sequence ID" value="AAC78561.1"/>
    <property type="molecule type" value="mRNA"/>
</dbReference>
<dbReference type="EMBL" id="BT007365">
    <property type="protein sequence ID" value="AAP36029.1"/>
    <property type="molecule type" value="mRNA"/>
</dbReference>
<dbReference type="EMBL" id="AK291801">
    <property type="protein sequence ID" value="BAF84490.1"/>
    <property type="molecule type" value="mRNA"/>
</dbReference>
<dbReference type="EMBL" id="AK226172">
    <property type="status" value="NOT_ANNOTATED_CDS"/>
    <property type="molecule type" value="mRNA"/>
</dbReference>
<dbReference type="EMBL" id="AC005899">
    <property type="status" value="NOT_ANNOTATED_CDS"/>
    <property type="molecule type" value="Genomic_DNA"/>
</dbReference>
<dbReference type="EMBL" id="CH471147">
    <property type="protein sequence ID" value="EAW80231.1"/>
    <property type="molecule type" value="Genomic_DNA"/>
</dbReference>
<dbReference type="EMBL" id="CH471147">
    <property type="protein sequence ID" value="EAW80233.1"/>
    <property type="molecule type" value="Genomic_DNA"/>
</dbReference>
<dbReference type="EMBL" id="CH471147">
    <property type="protein sequence ID" value="EAW80234.1"/>
    <property type="molecule type" value="Genomic_DNA"/>
</dbReference>
<dbReference type="EMBL" id="CH471147">
    <property type="protein sequence ID" value="EAW80235.1"/>
    <property type="molecule type" value="Genomic_DNA"/>
</dbReference>
<dbReference type="EMBL" id="CH471147">
    <property type="protein sequence ID" value="EAW80236.1"/>
    <property type="molecule type" value="Genomic_DNA"/>
</dbReference>
<dbReference type="EMBL" id="CH471147">
    <property type="protein sequence ID" value="EAW80237.1"/>
    <property type="molecule type" value="Genomic_DNA"/>
</dbReference>
<dbReference type="EMBL" id="BC002372">
    <property type="protein sequence ID" value="AAH02372.1"/>
    <property type="molecule type" value="mRNA"/>
</dbReference>
<dbReference type="EMBL" id="BC008023">
    <property type="protein sequence ID" value="AAH08023.1"/>
    <property type="molecule type" value="mRNA"/>
</dbReference>
<dbReference type="CCDS" id="CCDS11271.1">
    <molecule id="O43670-1"/>
</dbReference>
<dbReference type="CCDS" id="CCDS32614.1">
    <molecule id="O43670-2"/>
</dbReference>
<dbReference type="CCDS" id="CCDS42294.1">
    <molecule id="O43670-4"/>
</dbReference>
<dbReference type="RefSeq" id="NP_001027464.1">
    <molecule id="O43670-2"/>
    <property type="nucleotide sequence ID" value="NM_001032293.3"/>
</dbReference>
<dbReference type="RefSeq" id="NP_001091977.1">
    <molecule id="O43670-4"/>
    <property type="nucleotide sequence ID" value="NM_001098507.2"/>
</dbReference>
<dbReference type="RefSeq" id="NP_003448.1">
    <molecule id="O43670-1"/>
    <property type="nucleotide sequence ID" value="NM_003457.4"/>
</dbReference>
<dbReference type="RefSeq" id="XP_016880508.1">
    <property type="nucleotide sequence ID" value="XM_017025019.1"/>
</dbReference>
<dbReference type="SMR" id="O43670"/>
<dbReference type="BioGRID" id="113540">
    <property type="interactions" value="108"/>
</dbReference>
<dbReference type="CORUM" id="O43670"/>
<dbReference type="FunCoup" id="O43670">
    <property type="interactions" value="3186"/>
</dbReference>
<dbReference type="IntAct" id="O43670">
    <property type="interactions" value="46"/>
</dbReference>
<dbReference type="MINT" id="O43670"/>
<dbReference type="STRING" id="9606.ENSP00000378165"/>
<dbReference type="GlyCosmos" id="O43670">
    <property type="glycosylation" value="4 sites, 1 glycan"/>
</dbReference>
<dbReference type="GlyGen" id="O43670">
    <property type="glycosylation" value="24 sites, 1 N-linked glycan (1 site), 1 O-linked glycan (22 sites)"/>
</dbReference>
<dbReference type="iPTMnet" id="O43670"/>
<dbReference type="PhosphoSitePlus" id="O43670"/>
<dbReference type="SwissPalm" id="O43670"/>
<dbReference type="BioMuta" id="ZNF207"/>
<dbReference type="jPOST" id="O43670"/>
<dbReference type="MassIVE" id="O43670"/>
<dbReference type="PaxDb" id="9606-ENSP00000378165"/>
<dbReference type="PeptideAtlas" id="O43670"/>
<dbReference type="ProteomicsDB" id="15215"/>
<dbReference type="ProteomicsDB" id="49099">
    <molecule id="O43670-1"/>
</dbReference>
<dbReference type="ProteomicsDB" id="49100">
    <molecule id="O43670-2"/>
</dbReference>
<dbReference type="ProteomicsDB" id="49101">
    <molecule id="O43670-3"/>
</dbReference>
<dbReference type="Pumba" id="O43670"/>
<dbReference type="Antibodypedia" id="1741">
    <property type="antibodies" value="331 antibodies from 25 providers"/>
</dbReference>
<dbReference type="DNASU" id="7756"/>
<dbReference type="Ensembl" id="ENST00000321233.10">
    <molecule id="O43670-1"/>
    <property type="protein sequence ID" value="ENSP00000322777.6"/>
    <property type="gene ID" value="ENSG00000010244.19"/>
</dbReference>
<dbReference type="Ensembl" id="ENST00000394670.9">
    <molecule id="O43670-4"/>
    <property type="protein sequence ID" value="ENSP00000378165.4"/>
    <property type="gene ID" value="ENSG00000010244.19"/>
</dbReference>
<dbReference type="Ensembl" id="ENST00000394673.6">
    <molecule id="O43670-2"/>
    <property type="protein sequence ID" value="ENSP00000378168.2"/>
    <property type="gene ID" value="ENSG00000010244.19"/>
</dbReference>
<dbReference type="GeneID" id="7756"/>
<dbReference type="KEGG" id="hsa:7756"/>
<dbReference type="MANE-Select" id="ENST00000394670.9">
    <molecule id="O43670-4"/>
    <property type="protein sequence ID" value="ENSP00000378165.4"/>
    <property type="RefSeq nucleotide sequence ID" value="NM_001098507.2"/>
    <property type="RefSeq protein sequence ID" value="NP_001091977.1"/>
</dbReference>
<dbReference type="UCSC" id="uc002hhh.5">
    <molecule id="O43670-1"/>
    <property type="organism name" value="human"/>
</dbReference>
<dbReference type="AGR" id="HGNC:12998"/>
<dbReference type="CTD" id="7756"/>
<dbReference type="DisGeNET" id="7756"/>
<dbReference type="GeneCards" id="ZNF207"/>
<dbReference type="HGNC" id="HGNC:12998">
    <property type="gene designation" value="ZNF207"/>
</dbReference>
<dbReference type="HPA" id="ENSG00000010244">
    <property type="expression patterns" value="Low tissue specificity"/>
</dbReference>
<dbReference type="MIM" id="603428">
    <property type="type" value="gene"/>
</dbReference>
<dbReference type="neXtProt" id="NX_O43670"/>
<dbReference type="OpenTargets" id="ENSG00000010244"/>
<dbReference type="PharmGKB" id="PA37578"/>
<dbReference type="VEuPathDB" id="HostDB:ENSG00000010244"/>
<dbReference type="eggNOG" id="KOG2893">
    <property type="taxonomic scope" value="Eukaryota"/>
</dbReference>
<dbReference type="GeneTree" id="ENSGT00730000111057"/>
<dbReference type="HOGENOM" id="CLU_037132_3_2_1"/>
<dbReference type="InParanoid" id="O43670"/>
<dbReference type="OMA" id="KQVLRPW"/>
<dbReference type="OrthoDB" id="1306014at2759"/>
<dbReference type="PAN-GO" id="O43670">
    <property type="GO annotations" value="7 GO annotations based on evolutionary models"/>
</dbReference>
<dbReference type="PhylomeDB" id="O43670"/>
<dbReference type="TreeFam" id="TF313844"/>
<dbReference type="PathwayCommons" id="O43670"/>
<dbReference type="SignaLink" id="O43670"/>
<dbReference type="BioGRID-ORCS" id="7756">
    <property type="hits" value="680 hits in 1190 CRISPR screens"/>
</dbReference>
<dbReference type="CD-CODE" id="804901D1">
    <property type="entry name" value="Nuclear speckle"/>
</dbReference>
<dbReference type="CD-CODE" id="8C2F96ED">
    <property type="entry name" value="Centrosome"/>
</dbReference>
<dbReference type="CD-CODE" id="91857CE7">
    <property type="entry name" value="Nucleolus"/>
</dbReference>
<dbReference type="ChiTaRS" id="ZNF207">
    <property type="organism name" value="human"/>
</dbReference>
<dbReference type="GenomeRNAi" id="7756"/>
<dbReference type="Pharos" id="O43670">
    <property type="development level" value="Tbio"/>
</dbReference>
<dbReference type="PRO" id="PR:O43670"/>
<dbReference type="Proteomes" id="UP000005640">
    <property type="component" value="Chromosome 17"/>
</dbReference>
<dbReference type="RNAct" id="O43670">
    <property type="molecule type" value="protein"/>
</dbReference>
<dbReference type="Bgee" id="ENSG00000010244">
    <property type="expression patterns" value="Expressed in adrenal tissue and 210 other cell types or tissues"/>
</dbReference>
<dbReference type="ExpressionAtlas" id="O43670">
    <property type="expression patterns" value="baseline and differential"/>
</dbReference>
<dbReference type="GO" id="GO:0005737">
    <property type="term" value="C:cytoplasm"/>
    <property type="evidence" value="ECO:0007669"/>
    <property type="project" value="UniProtKB-KW"/>
</dbReference>
<dbReference type="GO" id="GO:0000776">
    <property type="term" value="C:kinetochore"/>
    <property type="evidence" value="ECO:0000314"/>
    <property type="project" value="UniProtKB"/>
</dbReference>
<dbReference type="GO" id="GO:0005874">
    <property type="term" value="C:microtubule"/>
    <property type="evidence" value="ECO:0007669"/>
    <property type="project" value="UniProtKB-KW"/>
</dbReference>
<dbReference type="GO" id="GO:0005730">
    <property type="term" value="C:nucleolus"/>
    <property type="evidence" value="ECO:0000314"/>
    <property type="project" value="HPA"/>
</dbReference>
<dbReference type="GO" id="GO:0005654">
    <property type="term" value="C:nucleoplasm"/>
    <property type="evidence" value="ECO:0000314"/>
    <property type="project" value="HPA"/>
</dbReference>
<dbReference type="GO" id="GO:0005634">
    <property type="term" value="C:nucleus"/>
    <property type="evidence" value="ECO:0000314"/>
    <property type="project" value="UniProtKB"/>
</dbReference>
<dbReference type="GO" id="GO:0005819">
    <property type="term" value="C:spindle"/>
    <property type="evidence" value="ECO:0007669"/>
    <property type="project" value="UniProtKB-SubCell"/>
</dbReference>
<dbReference type="GO" id="GO:1990047">
    <property type="term" value="C:spindle matrix"/>
    <property type="evidence" value="ECO:0000314"/>
    <property type="project" value="UniProtKB"/>
</dbReference>
<dbReference type="GO" id="GO:0003677">
    <property type="term" value="F:DNA binding"/>
    <property type="evidence" value="ECO:0007669"/>
    <property type="project" value="UniProtKB-KW"/>
</dbReference>
<dbReference type="GO" id="GO:0008201">
    <property type="term" value="F:heparin binding"/>
    <property type="evidence" value="ECO:0007669"/>
    <property type="project" value="Ensembl"/>
</dbReference>
<dbReference type="GO" id="GO:0008017">
    <property type="term" value="F:microtubule binding"/>
    <property type="evidence" value="ECO:0000314"/>
    <property type="project" value="UniProtKB"/>
</dbReference>
<dbReference type="GO" id="GO:0003723">
    <property type="term" value="F:RNA binding"/>
    <property type="evidence" value="ECO:0007005"/>
    <property type="project" value="UniProtKB"/>
</dbReference>
<dbReference type="GO" id="GO:0008270">
    <property type="term" value="F:zinc ion binding"/>
    <property type="evidence" value="ECO:0007669"/>
    <property type="project" value="UniProtKB-KW"/>
</dbReference>
<dbReference type="GO" id="GO:0008608">
    <property type="term" value="P:attachment of spindle microtubules to kinetochore"/>
    <property type="evidence" value="ECO:0000315"/>
    <property type="project" value="UniProtKB"/>
</dbReference>
<dbReference type="GO" id="GO:0051301">
    <property type="term" value="P:cell division"/>
    <property type="evidence" value="ECO:0007669"/>
    <property type="project" value="UniProtKB-KW"/>
</dbReference>
<dbReference type="GO" id="GO:0001578">
    <property type="term" value="P:microtubule bundle formation"/>
    <property type="evidence" value="ECO:0000250"/>
    <property type="project" value="UniProtKB"/>
</dbReference>
<dbReference type="GO" id="GO:0046785">
    <property type="term" value="P:microtubule polymerization"/>
    <property type="evidence" value="ECO:0000250"/>
    <property type="project" value="UniProtKB"/>
</dbReference>
<dbReference type="GO" id="GO:0000070">
    <property type="term" value="P:mitotic sister chromatid segregation"/>
    <property type="evidence" value="ECO:0000315"/>
    <property type="project" value="UniProtKB"/>
</dbReference>
<dbReference type="GO" id="GO:0090307">
    <property type="term" value="P:mitotic spindle assembly"/>
    <property type="evidence" value="ECO:0000314"/>
    <property type="project" value="UniProtKB"/>
</dbReference>
<dbReference type="GO" id="GO:0007094">
    <property type="term" value="P:mitotic spindle assembly checkpoint signaling"/>
    <property type="evidence" value="ECO:0000315"/>
    <property type="project" value="UniProtKB"/>
</dbReference>
<dbReference type="GO" id="GO:0050821">
    <property type="term" value="P:protein stabilization"/>
    <property type="evidence" value="ECO:0000315"/>
    <property type="project" value="UniProtKB"/>
</dbReference>
<dbReference type="GO" id="GO:0051983">
    <property type="term" value="P:regulation of chromosome segregation"/>
    <property type="evidence" value="ECO:0000315"/>
    <property type="project" value="UniProtKB"/>
</dbReference>
<dbReference type="CDD" id="cd20908">
    <property type="entry name" value="SUF4-like"/>
    <property type="match status" value="1"/>
</dbReference>
<dbReference type="InterPro" id="IPR013087">
    <property type="entry name" value="Znf_C2H2_type"/>
</dbReference>
<dbReference type="PANTHER" id="PTHR23215:SF0">
    <property type="entry name" value="BUB3-INTERACTING AND GLEBS MOTIF-CONTAINING PROTEIN ZNF207"/>
    <property type="match status" value="1"/>
</dbReference>
<dbReference type="PANTHER" id="PTHR23215">
    <property type="entry name" value="ZINC FINGER PROTEIN 207"/>
    <property type="match status" value="1"/>
</dbReference>
<dbReference type="PRINTS" id="PR01217">
    <property type="entry name" value="PRICHEXTENSN"/>
</dbReference>
<dbReference type="SMART" id="SM00355">
    <property type="entry name" value="ZnF_C2H2"/>
    <property type="match status" value="2"/>
</dbReference>
<dbReference type="PROSITE" id="PS00028">
    <property type="entry name" value="ZINC_FINGER_C2H2_1"/>
    <property type="match status" value="2"/>
</dbReference>
<reference key="1">
    <citation type="journal article" date="1998" name="Genomics">
        <title>ZNF207, a ubiquitously expressed zinc finger gene on chromosome 6p21.3.</title>
        <authorList>
            <person name="Pahl P.M.B."/>
            <person name="Hodges Y.K."/>
            <person name="Meltesen L."/>
            <person name="Perryman M.B."/>
            <person name="Horwitz K.B."/>
            <person name="Horwitz L.D."/>
        </authorList>
    </citation>
    <scope>NUCLEOTIDE SEQUENCE [MRNA] (ISOFORM 1)</scope>
    <scope>TISSUE SPECIFICITY</scope>
</reference>
<reference key="2">
    <citation type="submission" date="2003-05" db="EMBL/GenBank/DDBJ databases">
        <title>Cloning of human full-length CDSs in BD Creator(TM) system donor vector.</title>
        <authorList>
            <person name="Kalnine N."/>
            <person name="Chen X."/>
            <person name="Rolfs A."/>
            <person name="Halleck A."/>
            <person name="Hines L."/>
            <person name="Eisenstein S."/>
            <person name="Koundinya M."/>
            <person name="Raphael J."/>
            <person name="Moreira D."/>
            <person name="Kelley T."/>
            <person name="LaBaer J."/>
            <person name="Lin Y."/>
            <person name="Phelan M."/>
            <person name="Farmer A."/>
        </authorList>
    </citation>
    <scope>NUCLEOTIDE SEQUENCE [LARGE SCALE MRNA] (ISOFORM 3)</scope>
</reference>
<reference key="3">
    <citation type="journal article" date="2004" name="Nat. Genet.">
        <title>Complete sequencing and characterization of 21,243 full-length human cDNAs.</title>
        <authorList>
            <person name="Ota T."/>
            <person name="Suzuki Y."/>
            <person name="Nishikawa T."/>
            <person name="Otsuki T."/>
            <person name="Sugiyama T."/>
            <person name="Irie R."/>
            <person name="Wakamatsu A."/>
            <person name="Hayashi K."/>
            <person name="Sato H."/>
            <person name="Nagai K."/>
            <person name="Kimura K."/>
            <person name="Makita H."/>
            <person name="Sekine M."/>
            <person name="Obayashi M."/>
            <person name="Nishi T."/>
            <person name="Shibahara T."/>
            <person name="Tanaka T."/>
            <person name="Ishii S."/>
            <person name="Yamamoto J."/>
            <person name="Saito K."/>
            <person name="Kawai Y."/>
            <person name="Isono Y."/>
            <person name="Nakamura Y."/>
            <person name="Nagahari K."/>
            <person name="Murakami K."/>
            <person name="Yasuda T."/>
            <person name="Iwayanagi T."/>
            <person name="Wagatsuma M."/>
            <person name="Shiratori A."/>
            <person name="Sudo H."/>
            <person name="Hosoiri T."/>
            <person name="Kaku Y."/>
            <person name="Kodaira H."/>
            <person name="Kondo H."/>
            <person name="Sugawara M."/>
            <person name="Takahashi M."/>
            <person name="Kanda K."/>
            <person name="Yokoi T."/>
            <person name="Furuya T."/>
            <person name="Kikkawa E."/>
            <person name="Omura Y."/>
            <person name="Abe K."/>
            <person name="Kamihara K."/>
            <person name="Katsuta N."/>
            <person name="Sato K."/>
            <person name="Tanikawa M."/>
            <person name="Yamazaki M."/>
            <person name="Ninomiya K."/>
            <person name="Ishibashi T."/>
            <person name="Yamashita H."/>
            <person name="Murakawa K."/>
            <person name="Fujimori K."/>
            <person name="Tanai H."/>
            <person name="Kimata M."/>
            <person name="Watanabe M."/>
            <person name="Hiraoka S."/>
            <person name="Chiba Y."/>
            <person name="Ishida S."/>
            <person name="Ono Y."/>
            <person name="Takiguchi S."/>
            <person name="Watanabe S."/>
            <person name="Yosida M."/>
            <person name="Hotuta T."/>
            <person name="Kusano J."/>
            <person name="Kanehori K."/>
            <person name="Takahashi-Fujii A."/>
            <person name="Hara H."/>
            <person name="Tanase T.-O."/>
            <person name="Nomura Y."/>
            <person name="Togiya S."/>
            <person name="Komai F."/>
            <person name="Hara R."/>
            <person name="Takeuchi K."/>
            <person name="Arita M."/>
            <person name="Imose N."/>
            <person name="Musashino K."/>
            <person name="Yuuki H."/>
            <person name="Oshima A."/>
            <person name="Sasaki N."/>
            <person name="Aotsuka S."/>
            <person name="Yoshikawa Y."/>
            <person name="Matsunawa H."/>
            <person name="Ichihara T."/>
            <person name="Shiohata N."/>
            <person name="Sano S."/>
            <person name="Moriya S."/>
            <person name="Momiyama H."/>
            <person name="Satoh N."/>
            <person name="Takami S."/>
            <person name="Terashima Y."/>
            <person name="Suzuki O."/>
            <person name="Nakagawa S."/>
            <person name="Senoh A."/>
            <person name="Mizoguchi H."/>
            <person name="Goto Y."/>
            <person name="Shimizu F."/>
            <person name="Wakebe H."/>
            <person name="Hishigaki H."/>
            <person name="Watanabe T."/>
            <person name="Sugiyama A."/>
            <person name="Takemoto M."/>
            <person name="Kawakami B."/>
            <person name="Yamazaki M."/>
            <person name="Watanabe K."/>
            <person name="Kumagai A."/>
            <person name="Itakura S."/>
            <person name="Fukuzumi Y."/>
            <person name="Fujimori Y."/>
            <person name="Komiyama M."/>
            <person name="Tashiro H."/>
            <person name="Tanigami A."/>
            <person name="Fujiwara T."/>
            <person name="Ono T."/>
            <person name="Yamada K."/>
            <person name="Fujii Y."/>
            <person name="Ozaki K."/>
            <person name="Hirao M."/>
            <person name="Ohmori Y."/>
            <person name="Kawabata A."/>
            <person name="Hikiji T."/>
            <person name="Kobatake N."/>
            <person name="Inagaki H."/>
            <person name="Ikema Y."/>
            <person name="Okamoto S."/>
            <person name="Okitani R."/>
            <person name="Kawakami T."/>
            <person name="Noguchi S."/>
            <person name="Itoh T."/>
            <person name="Shigeta K."/>
            <person name="Senba T."/>
            <person name="Matsumura K."/>
            <person name="Nakajima Y."/>
            <person name="Mizuno T."/>
            <person name="Morinaga M."/>
            <person name="Sasaki M."/>
            <person name="Togashi T."/>
            <person name="Oyama M."/>
            <person name="Hata H."/>
            <person name="Watanabe M."/>
            <person name="Komatsu T."/>
            <person name="Mizushima-Sugano J."/>
            <person name="Satoh T."/>
            <person name="Shirai Y."/>
            <person name="Takahashi Y."/>
            <person name="Nakagawa K."/>
            <person name="Okumura K."/>
            <person name="Nagase T."/>
            <person name="Nomura N."/>
            <person name="Kikuchi H."/>
            <person name="Masuho Y."/>
            <person name="Yamashita R."/>
            <person name="Nakai K."/>
            <person name="Yada T."/>
            <person name="Nakamura Y."/>
            <person name="Ohara O."/>
            <person name="Isogai T."/>
            <person name="Sugano S."/>
        </authorList>
    </citation>
    <scope>NUCLEOTIDE SEQUENCE [LARGE SCALE MRNA] (ISOFORM 1)</scope>
    <source>
        <tissue>Prostate</tissue>
    </source>
</reference>
<reference key="4">
    <citation type="submission" date="2006-07" db="EMBL/GenBank/DDBJ databases">
        <authorList>
            <person name="Totoki Y."/>
            <person name="Toyoda A."/>
            <person name="Takeda T."/>
            <person name="Sakaki Y."/>
            <person name="Tanaka A."/>
            <person name="Yokoyama S."/>
            <person name="Ohara O."/>
            <person name="Nagase T."/>
            <person name="Kikuno R.F."/>
        </authorList>
    </citation>
    <scope>NUCLEOTIDE SEQUENCE [LARGE SCALE MRNA] (ISOFORM 4)</scope>
    <source>
        <tissue>Brain</tissue>
    </source>
</reference>
<reference key="5">
    <citation type="journal article" date="2006" name="Nature">
        <title>DNA sequence of human chromosome 17 and analysis of rearrangement in the human lineage.</title>
        <authorList>
            <person name="Zody M.C."/>
            <person name="Garber M."/>
            <person name="Adams D.J."/>
            <person name="Sharpe T."/>
            <person name="Harrow J."/>
            <person name="Lupski J.R."/>
            <person name="Nicholson C."/>
            <person name="Searle S.M."/>
            <person name="Wilming L."/>
            <person name="Young S.K."/>
            <person name="Abouelleil A."/>
            <person name="Allen N.R."/>
            <person name="Bi W."/>
            <person name="Bloom T."/>
            <person name="Borowsky M.L."/>
            <person name="Bugalter B.E."/>
            <person name="Butler J."/>
            <person name="Chang J.L."/>
            <person name="Chen C.-K."/>
            <person name="Cook A."/>
            <person name="Corum B."/>
            <person name="Cuomo C.A."/>
            <person name="de Jong P.J."/>
            <person name="DeCaprio D."/>
            <person name="Dewar K."/>
            <person name="FitzGerald M."/>
            <person name="Gilbert J."/>
            <person name="Gibson R."/>
            <person name="Gnerre S."/>
            <person name="Goldstein S."/>
            <person name="Grafham D.V."/>
            <person name="Grocock R."/>
            <person name="Hafez N."/>
            <person name="Hagopian D.S."/>
            <person name="Hart E."/>
            <person name="Norman C.H."/>
            <person name="Humphray S."/>
            <person name="Jaffe D.B."/>
            <person name="Jones M."/>
            <person name="Kamal M."/>
            <person name="Khodiyar V.K."/>
            <person name="LaButti K."/>
            <person name="Laird G."/>
            <person name="Lehoczky J."/>
            <person name="Liu X."/>
            <person name="Lokyitsang T."/>
            <person name="Loveland J."/>
            <person name="Lui A."/>
            <person name="Macdonald P."/>
            <person name="Major J.E."/>
            <person name="Matthews L."/>
            <person name="Mauceli E."/>
            <person name="McCarroll S.A."/>
            <person name="Mihalev A.H."/>
            <person name="Mudge J."/>
            <person name="Nguyen C."/>
            <person name="Nicol R."/>
            <person name="O'Leary S.B."/>
            <person name="Osoegawa K."/>
            <person name="Schwartz D.C."/>
            <person name="Shaw-Smith C."/>
            <person name="Stankiewicz P."/>
            <person name="Steward C."/>
            <person name="Swarbreck D."/>
            <person name="Venkataraman V."/>
            <person name="Whittaker C.A."/>
            <person name="Yang X."/>
            <person name="Zimmer A.R."/>
            <person name="Bradley A."/>
            <person name="Hubbard T."/>
            <person name="Birren B.W."/>
            <person name="Rogers J."/>
            <person name="Lander E.S."/>
            <person name="Nusbaum C."/>
        </authorList>
    </citation>
    <scope>NUCLEOTIDE SEQUENCE [LARGE SCALE GENOMIC DNA]</scope>
</reference>
<reference key="6">
    <citation type="submission" date="2005-09" db="EMBL/GenBank/DDBJ databases">
        <authorList>
            <person name="Mural R.J."/>
            <person name="Istrail S."/>
            <person name="Sutton G.G."/>
            <person name="Florea L."/>
            <person name="Halpern A.L."/>
            <person name="Mobarry C.M."/>
            <person name="Lippert R."/>
            <person name="Walenz B."/>
            <person name="Shatkay H."/>
            <person name="Dew I."/>
            <person name="Miller J.R."/>
            <person name="Flanigan M.J."/>
            <person name="Edwards N.J."/>
            <person name="Bolanos R."/>
            <person name="Fasulo D."/>
            <person name="Halldorsson B.V."/>
            <person name="Hannenhalli S."/>
            <person name="Turner R."/>
            <person name="Yooseph S."/>
            <person name="Lu F."/>
            <person name="Nusskern D.R."/>
            <person name="Shue B.C."/>
            <person name="Zheng X.H."/>
            <person name="Zhong F."/>
            <person name="Delcher A.L."/>
            <person name="Huson D.H."/>
            <person name="Kravitz S.A."/>
            <person name="Mouchard L."/>
            <person name="Reinert K."/>
            <person name="Remington K.A."/>
            <person name="Clark A.G."/>
            <person name="Waterman M.S."/>
            <person name="Eichler E.E."/>
            <person name="Adams M.D."/>
            <person name="Hunkapiller M.W."/>
            <person name="Myers E.W."/>
            <person name="Venter J.C."/>
        </authorList>
    </citation>
    <scope>NUCLEOTIDE SEQUENCE [LARGE SCALE GENOMIC DNA]</scope>
</reference>
<reference key="7">
    <citation type="journal article" date="2004" name="Genome Res.">
        <title>The status, quality, and expansion of the NIH full-length cDNA project: the Mammalian Gene Collection (MGC).</title>
        <authorList>
            <consortium name="The MGC Project Team"/>
        </authorList>
    </citation>
    <scope>NUCLEOTIDE SEQUENCE [LARGE SCALE MRNA] (ISOFORMS 2 AND 3)</scope>
    <source>
        <tissue>Lung</tissue>
    </source>
</reference>
<reference key="8">
    <citation type="journal article" date="2011" name="BMC Syst. Biol.">
        <title>Initial characterization of the human central proteome.</title>
        <authorList>
            <person name="Burkard T.R."/>
            <person name="Planyavsky M."/>
            <person name="Kaupe I."/>
            <person name="Breitwieser F.P."/>
            <person name="Buerckstuemmer T."/>
            <person name="Bennett K.L."/>
            <person name="Superti-Furga G."/>
            <person name="Colinge J."/>
        </authorList>
    </citation>
    <scope>IDENTIFICATION BY MASS SPECTROMETRY [LARGE SCALE ANALYSIS]</scope>
</reference>
<reference key="9">
    <citation type="journal article" date="2014" name="Dev. Cell">
        <title>A microtubule-associated zinc finger protein, BuGZ, regulates mitotic chromosome alignment by ensuring Bub3 stability and kinetochore targeting.</title>
        <authorList>
            <person name="Jiang H."/>
            <person name="He X."/>
            <person name="Wang S."/>
            <person name="Jia J."/>
            <person name="Wan Y."/>
            <person name="Wang Y."/>
            <person name="Zeng R."/>
            <person name="Yates J. III"/>
            <person name="Zhu X."/>
            <person name="Zheng Y."/>
        </authorList>
    </citation>
    <scope>FUNCTION</scope>
    <scope>SUBCELLULAR LOCATION</scope>
    <scope>INTERACTION WITH BUB3</scope>
    <scope>MUTAGENESIS OF 373-GLU-GLU-374</scope>
    <scope>MICROTUBULE-BINDING</scope>
</reference>
<reference key="10">
    <citation type="journal article" date="2014" name="Dev. Cell">
        <title>BuGZ is required for Bub3 stability, Bub1 kinetochore function, and chromosome alignment.</title>
        <authorList>
            <person name="Toledo C.M."/>
            <person name="Herman J.A."/>
            <person name="Olsen J.B."/>
            <person name="Ding Y."/>
            <person name="Corrin P."/>
            <person name="Girard E.J."/>
            <person name="Olson J.M."/>
            <person name="Emili A."/>
            <person name="Deluca J.G."/>
            <person name="Paddison P.J."/>
        </authorList>
    </citation>
    <scope>FUNCTION</scope>
    <scope>SUBCELLULAR LOCATION</scope>
    <scope>INTERACTION WITH BUB3</scope>
    <scope>MUTAGENESIS OF 373-GLU-GLU-374</scope>
</reference>
<reference key="11">
    <citation type="journal article" date="2015" name="Cell">
        <title>Phase transition of spindle-associated protein regulate spindle apparatus assembly.</title>
        <authorList>
            <person name="Jiang H."/>
            <person name="Wang S."/>
            <person name="Huang Y."/>
            <person name="He X."/>
            <person name="Cui H."/>
            <person name="Zhu X."/>
            <person name="Zheng Y."/>
        </authorList>
    </citation>
    <scope>FUNCTION</scope>
    <scope>SUBCELLULAR LOCATION</scope>
</reference>
<gene>
    <name evidence="13" type="primary">ZNF207</name>
    <name evidence="8 9" type="synonym">BUGZ</name>
</gene>
<name>ZN207_HUMAN</name>
<proteinExistence type="evidence at protein level"/>
<feature type="chain" id="PRO_0000047453" description="BUB3-interacting and GLEBS motif-containing protein ZNF207">
    <location>
        <begin position="1"/>
        <end position="478"/>
    </location>
</feature>
<feature type="zinc finger region" description="C2H2-type 1">
    <location>
        <begin position="11"/>
        <end position="34"/>
    </location>
</feature>
<feature type="zinc finger region" description="C2H2-type 2">
    <location>
        <begin position="35"/>
        <end position="58"/>
    </location>
</feature>
<feature type="region of interest" description="Microtubule-binding region" evidence="3">
    <location>
        <begin position="1"/>
        <end position="92"/>
    </location>
</feature>
<feature type="region of interest" description="Disordered" evidence="2">
    <location>
        <begin position="99"/>
        <end position="157"/>
    </location>
</feature>
<feature type="region of interest" description="Disordered" evidence="2">
    <location>
        <begin position="238"/>
        <end position="276"/>
    </location>
</feature>
<feature type="region of interest" description="Disordered" evidence="2">
    <location>
        <begin position="300"/>
        <end position="362"/>
    </location>
</feature>
<feature type="region of interest" description="GLEBS" evidence="3 4">
    <location>
        <begin position="359"/>
        <end position="391"/>
    </location>
</feature>
<feature type="region of interest" description="Disordered" evidence="2">
    <location>
        <begin position="384"/>
        <end position="478"/>
    </location>
</feature>
<feature type="compositionally biased region" description="Basic and acidic residues" evidence="2">
    <location>
        <begin position="99"/>
        <end position="111"/>
    </location>
</feature>
<feature type="compositionally biased region" description="Acidic residues" evidence="2">
    <location>
        <begin position="112"/>
        <end position="121"/>
    </location>
</feature>
<feature type="compositionally biased region" description="Polar residues" evidence="2">
    <location>
        <begin position="127"/>
        <end position="136"/>
    </location>
</feature>
<feature type="compositionally biased region" description="Pro residues" evidence="2">
    <location>
        <begin position="142"/>
        <end position="157"/>
    </location>
</feature>
<feature type="compositionally biased region" description="Low complexity" evidence="2">
    <location>
        <begin position="267"/>
        <end position="276"/>
    </location>
</feature>
<feature type="compositionally biased region" description="Low complexity" evidence="2">
    <location>
        <begin position="310"/>
        <end position="362"/>
    </location>
</feature>
<feature type="compositionally biased region" description="Low complexity" evidence="2">
    <location>
        <begin position="433"/>
        <end position="446"/>
    </location>
</feature>
<feature type="compositionally biased region" description="Pro residues" evidence="2">
    <location>
        <begin position="447"/>
        <end position="467"/>
    </location>
</feature>
<feature type="splice variant" id="VSP_006903" description="In isoform 3." evidence="7 11">
    <location>
        <begin position="48"/>
        <end position="146"/>
    </location>
</feature>
<feature type="splice variant" id="VSP_006904" description="In isoform 2, isoform 3 and isoform 4." evidence="7 11 12">
    <original>G</original>
    <variation>GLHHQRKYTQSFCGENI</variation>
    <location>
        <position position="184"/>
    </location>
</feature>
<feature type="splice variant" id="VSP_006905" description="In isoform 2." evidence="7">
    <location>
        <begin position="261"/>
        <end position="291"/>
    </location>
</feature>
<feature type="sequence variant" id="VAR_019974" description="In dbSNP:rs3795244.">
    <original>A</original>
    <variation>S</variation>
    <location>
        <position position="224"/>
    </location>
</feature>
<feature type="mutagenesis site" description="In BuGZAA: Abolishes interaction with BUB3." evidence="3 4">
    <original>EE</original>
    <variation>AA</variation>
    <location>
        <begin position="373"/>
        <end position="374"/>
    </location>
</feature>
<protein>
    <recommendedName>
        <fullName evidence="8 9">BUB3-interacting and GLEBS motif-containing protein ZNF207</fullName>
        <shortName evidence="8 9">BuGZ</shortName>
        <shortName evidence="10">hBuGZ</shortName>
    </recommendedName>
    <alternativeName>
        <fullName>Zinc finger protein 207</fullName>
    </alternativeName>
</protein>